<accession>B4K934</accession>
<comment type="function">
    <text evidence="2">Has exonuclease activity on both single-stranded and duplex templates bearing overhangs, but not blunt ended duplex DNA, and cleaves in a 3'-5' direction. Essential for the formation of DNA replication focal centers. Has an important role in maintaining genome stability.</text>
</comment>
<comment type="subcellular location">
    <subcellularLocation>
        <location evidence="2">Nucleus</location>
    </subcellularLocation>
</comment>
<comment type="similarity">
    <text evidence="5">Belongs to the WRNexo family.</text>
</comment>
<evidence type="ECO:0000250" key="1">
    <source>
        <dbReference type="UniProtKB" id="Q14191"/>
    </source>
</evidence>
<evidence type="ECO:0000250" key="2">
    <source>
        <dbReference type="UniProtKB" id="Q9VE86"/>
    </source>
</evidence>
<evidence type="ECO:0000255" key="3"/>
<evidence type="ECO:0000256" key="4">
    <source>
        <dbReference type="SAM" id="MobiDB-lite"/>
    </source>
</evidence>
<evidence type="ECO:0000305" key="5"/>
<evidence type="ECO:0000312" key="6">
    <source>
        <dbReference type="EMBL" id="EDW14447.1"/>
    </source>
</evidence>
<keyword id="KW-0269">Exonuclease</keyword>
<keyword id="KW-0378">Hydrolase</keyword>
<keyword id="KW-0460">Magnesium</keyword>
<keyword id="KW-0479">Metal-binding</keyword>
<keyword id="KW-0540">Nuclease</keyword>
<keyword id="KW-0539">Nucleus</keyword>
<keyword id="KW-0597">Phosphoprotein</keyword>
<keyword id="KW-1185">Reference proteome</keyword>
<sequence length="329" mass="37633">MDKYLVKMPIKSTKNVVSEEKISVKEEKPKPKKVVKEQSAIANKRKNLDTPEIVNKENAEVENPPKRRSTRVTRSTRSMADVGTPSPEKEIPEKLPFIKYRGAIKYFTESQEIAASADEVMQWVDQQTHTEIVPMAFDMEWPFSFQTGPGKSSVIQICVDERCCYVYQLSNLKKIPAALVALINHPKVRLHGVNIKADFRKLARDFPEVAAEPLIEKCVDLGVWCNEVCETGGRWSLERLANFIAKKAMDKSKKVRMSKWHVIPLDENQLMYAAIDVYIGQVIYREIEQREQTKLKNEAEFKEQNGENAFKAVKALGETFLTKINEVTL</sequence>
<proteinExistence type="inferred from homology"/>
<organism>
    <name type="scientific">Drosophila mojavensis</name>
    <name type="common">Fruit fly</name>
    <dbReference type="NCBI Taxonomy" id="7230"/>
    <lineage>
        <taxon>Eukaryota</taxon>
        <taxon>Metazoa</taxon>
        <taxon>Ecdysozoa</taxon>
        <taxon>Arthropoda</taxon>
        <taxon>Hexapoda</taxon>
        <taxon>Insecta</taxon>
        <taxon>Pterygota</taxon>
        <taxon>Neoptera</taxon>
        <taxon>Endopterygota</taxon>
        <taxon>Diptera</taxon>
        <taxon>Brachycera</taxon>
        <taxon>Muscomorpha</taxon>
        <taxon>Ephydroidea</taxon>
        <taxon>Drosophilidae</taxon>
        <taxon>Drosophila</taxon>
    </lineage>
</organism>
<name>WRNXO_DROMO</name>
<protein>
    <recommendedName>
        <fullName evidence="2">3'-5' exonuclease</fullName>
        <ecNumber>3.1.11.-</ecNumber>
    </recommendedName>
    <alternativeName>
        <fullName>Werner Syndrome-like exonuclease</fullName>
    </alternativeName>
</protein>
<feature type="chain" id="PRO_0000399377" description="3'-5' exonuclease">
    <location>
        <begin position="1"/>
        <end position="329"/>
    </location>
</feature>
<feature type="domain" description="3'-5' exonuclease" evidence="3">
    <location>
        <begin position="130"/>
        <end position="288"/>
    </location>
</feature>
<feature type="region of interest" description="Disordered" evidence="4">
    <location>
        <begin position="26"/>
        <end position="88"/>
    </location>
</feature>
<feature type="compositionally biased region" description="Basic and acidic residues" evidence="4">
    <location>
        <begin position="46"/>
        <end position="65"/>
    </location>
</feature>
<feature type="binding site" evidence="2">
    <location>
        <position position="138"/>
    </location>
    <ligand>
        <name>Mg(2+)</name>
        <dbReference type="ChEBI" id="CHEBI:18420"/>
        <label>1</label>
        <note>catalytic</note>
    </ligand>
</feature>
<feature type="binding site" evidence="2">
    <location>
        <position position="138"/>
    </location>
    <ligand>
        <name>Mg(2+)</name>
        <dbReference type="ChEBI" id="CHEBI:18420"/>
        <label>2</label>
        <note>catalytic</note>
    </ligand>
</feature>
<feature type="binding site" evidence="2">
    <location>
        <position position="140"/>
    </location>
    <ligand>
        <name>Mg(2+)</name>
        <dbReference type="ChEBI" id="CHEBI:18420"/>
        <label>1</label>
        <note>catalytic</note>
    </ligand>
</feature>
<feature type="binding site" evidence="1">
    <location>
        <position position="276"/>
    </location>
    <ligand>
        <name>Mg(2+)</name>
        <dbReference type="ChEBI" id="CHEBI:18420"/>
        <label>1</label>
        <note>catalytic</note>
    </ligand>
</feature>
<feature type="modified residue" description="Phosphoserine" evidence="2">
    <location>
        <position position="78"/>
    </location>
</feature>
<feature type="modified residue" description="Phosphoserine" evidence="2">
    <location>
        <position position="86"/>
    </location>
</feature>
<reference evidence="6" key="1">
    <citation type="journal article" date="2007" name="Nature">
        <title>Evolution of genes and genomes on the Drosophila phylogeny.</title>
        <authorList>
            <consortium name="Drosophila 12 genomes consortium"/>
        </authorList>
    </citation>
    <scope>NUCLEOTIDE SEQUENCE [LARGE SCALE GENOMIC DNA]</scope>
    <source>
        <strain evidence="6">Tucson 15081-1352.22</strain>
    </source>
</reference>
<gene>
    <name evidence="2" type="primary">WRNexo</name>
    <name type="ORF">GI24264</name>
</gene>
<dbReference type="EC" id="3.1.11.-"/>
<dbReference type="EMBL" id="CH933806">
    <property type="protein sequence ID" value="EDW14447.1"/>
    <property type="molecule type" value="Genomic_DNA"/>
</dbReference>
<dbReference type="SMR" id="B4K934"/>
<dbReference type="FunCoup" id="B4K934">
    <property type="interactions" value="360"/>
</dbReference>
<dbReference type="GeneID" id="6572881"/>
<dbReference type="KEGG" id="dmo:Dmoj_GI24264"/>
<dbReference type="eggNOG" id="KOG4373">
    <property type="taxonomic scope" value="Eukaryota"/>
</dbReference>
<dbReference type="HOGENOM" id="CLU_845357_0_0_1"/>
<dbReference type="InParanoid" id="B4K934"/>
<dbReference type="OMA" id="CCYVYQL"/>
<dbReference type="OrthoDB" id="10261556at2759"/>
<dbReference type="PhylomeDB" id="B4K934"/>
<dbReference type="ChiTaRS" id="WRNexo">
    <property type="organism name" value="fly"/>
</dbReference>
<dbReference type="Proteomes" id="UP000009192">
    <property type="component" value="Unassembled WGS sequence"/>
</dbReference>
<dbReference type="GO" id="GO:0005634">
    <property type="term" value="C:nucleus"/>
    <property type="evidence" value="ECO:0000250"/>
    <property type="project" value="UniProtKB"/>
</dbReference>
<dbReference type="GO" id="GO:0008408">
    <property type="term" value="F:3'-5' exonuclease activity"/>
    <property type="evidence" value="ECO:0000250"/>
    <property type="project" value="UniProtKB"/>
</dbReference>
<dbReference type="GO" id="GO:0046872">
    <property type="term" value="F:metal ion binding"/>
    <property type="evidence" value="ECO:0007669"/>
    <property type="project" value="UniProtKB-KW"/>
</dbReference>
<dbReference type="GO" id="GO:0003676">
    <property type="term" value="F:nucleic acid binding"/>
    <property type="evidence" value="ECO:0007669"/>
    <property type="project" value="InterPro"/>
</dbReference>
<dbReference type="GO" id="GO:0045950">
    <property type="term" value="P:negative regulation of mitotic recombination"/>
    <property type="evidence" value="ECO:0000250"/>
    <property type="project" value="UniProtKB"/>
</dbReference>
<dbReference type="GO" id="GO:0006139">
    <property type="term" value="P:nucleobase-containing compound metabolic process"/>
    <property type="evidence" value="ECO:0007669"/>
    <property type="project" value="InterPro"/>
</dbReference>
<dbReference type="CDD" id="cd06141">
    <property type="entry name" value="WRN_exo"/>
    <property type="match status" value="1"/>
</dbReference>
<dbReference type="FunFam" id="3.30.420.10:FF:000104">
    <property type="entry name" value="Werner Syndrome-like exonuclease"/>
    <property type="match status" value="1"/>
</dbReference>
<dbReference type="Gene3D" id="3.30.420.10">
    <property type="entry name" value="Ribonuclease H-like superfamily/Ribonuclease H"/>
    <property type="match status" value="1"/>
</dbReference>
<dbReference type="InterPro" id="IPR002562">
    <property type="entry name" value="3'-5'_exonuclease_dom"/>
</dbReference>
<dbReference type="InterPro" id="IPR051132">
    <property type="entry name" value="3-5_Exonuclease_domain"/>
</dbReference>
<dbReference type="InterPro" id="IPR012337">
    <property type="entry name" value="RNaseH-like_sf"/>
</dbReference>
<dbReference type="InterPro" id="IPR036397">
    <property type="entry name" value="RNaseH_sf"/>
</dbReference>
<dbReference type="PANTHER" id="PTHR13620:SF109">
    <property type="entry name" value="3'-5' EXONUCLEASE"/>
    <property type="match status" value="1"/>
</dbReference>
<dbReference type="PANTHER" id="PTHR13620">
    <property type="entry name" value="3-5 EXONUCLEASE"/>
    <property type="match status" value="1"/>
</dbReference>
<dbReference type="Pfam" id="PF01612">
    <property type="entry name" value="DNA_pol_A_exo1"/>
    <property type="match status" value="1"/>
</dbReference>
<dbReference type="SMART" id="SM00474">
    <property type="entry name" value="35EXOc"/>
    <property type="match status" value="1"/>
</dbReference>
<dbReference type="SUPFAM" id="SSF53098">
    <property type="entry name" value="Ribonuclease H-like"/>
    <property type="match status" value="1"/>
</dbReference>